<dbReference type="EC" id="7.1.1.-" evidence="1"/>
<dbReference type="EMBL" id="CP001657">
    <property type="protein sequence ID" value="ACT13800.1"/>
    <property type="molecule type" value="Genomic_DNA"/>
</dbReference>
<dbReference type="RefSeq" id="WP_015840966.1">
    <property type="nucleotide sequence ID" value="NC_012917.1"/>
</dbReference>
<dbReference type="SMR" id="C6DA44"/>
<dbReference type="STRING" id="561230.PC1_2770"/>
<dbReference type="GeneID" id="67793343"/>
<dbReference type="KEGG" id="pct:PC1_2770"/>
<dbReference type="eggNOG" id="COG0649">
    <property type="taxonomic scope" value="Bacteria"/>
</dbReference>
<dbReference type="eggNOG" id="COG0852">
    <property type="taxonomic scope" value="Bacteria"/>
</dbReference>
<dbReference type="HOGENOM" id="CLU_015134_3_2_6"/>
<dbReference type="OrthoDB" id="9801496at2"/>
<dbReference type="Proteomes" id="UP000002736">
    <property type="component" value="Chromosome"/>
</dbReference>
<dbReference type="GO" id="GO:0030964">
    <property type="term" value="C:NADH dehydrogenase complex"/>
    <property type="evidence" value="ECO:0007669"/>
    <property type="project" value="InterPro"/>
</dbReference>
<dbReference type="GO" id="GO:0005886">
    <property type="term" value="C:plasma membrane"/>
    <property type="evidence" value="ECO:0007669"/>
    <property type="project" value="UniProtKB-SubCell"/>
</dbReference>
<dbReference type="GO" id="GO:0051287">
    <property type="term" value="F:NAD binding"/>
    <property type="evidence" value="ECO:0007669"/>
    <property type="project" value="InterPro"/>
</dbReference>
<dbReference type="GO" id="GO:0008137">
    <property type="term" value="F:NADH dehydrogenase (ubiquinone) activity"/>
    <property type="evidence" value="ECO:0007669"/>
    <property type="project" value="InterPro"/>
</dbReference>
<dbReference type="GO" id="GO:0050136">
    <property type="term" value="F:NADH:ubiquinone reductase (non-electrogenic) activity"/>
    <property type="evidence" value="ECO:0007669"/>
    <property type="project" value="UniProtKB-UniRule"/>
</dbReference>
<dbReference type="GO" id="GO:0048038">
    <property type="term" value="F:quinone binding"/>
    <property type="evidence" value="ECO:0007669"/>
    <property type="project" value="UniProtKB-KW"/>
</dbReference>
<dbReference type="FunFam" id="1.10.645.10:FF:000001">
    <property type="entry name" value="NADH-quinone oxidoreductase subunit C/D"/>
    <property type="match status" value="1"/>
</dbReference>
<dbReference type="FunFam" id="3.30.460.80:FF:000001">
    <property type="entry name" value="NADH-quinone oxidoreductase subunit C/D"/>
    <property type="match status" value="1"/>
</dbReference>
<dbReference type="Gene3D" id="1.10.645.10">
    <property type="entry name" value="Cytochrome-c3 Hydrogenase, chain B"/>
    <property type="match status" value="1"/>
</dbReference>
<dbReference type="Gene3D" id="3.30.460.80">
    <property type="entry name" value="NADH:ubiquinone oxidoreductase, 30kDa subunit"/>
    <property type="match status" value="1"/>
</dbReference>
<dbReference type="HAMAP" id="MF_01359">
    <property type="entry name" value="NDH1_NuoCD_1"/>
    <property type="match status" value="1"/>
</dbReference>
<dbReference type="HAMAP" id="MF_01358">
    <property type="entry name" value="NDH1_NuoD"/>
    <property type="match status" value="1"/>
</dbReference>
<dbReference type="InterPro" id="IPR010218">
    <property type="entry name" value="NADH_DH_suC"/>
</dbReference>
<dbReference type="InterPro" id="IPR023062">
    <property type="entry name" value="NADH_DH_suCD"/>
</dbReference>
<dbReference type="InterPro" id="IPR001135">
    <property type="entry name" value="NADH_Q_OxRdtase_suD"/>
</dbReference>
<dbReference type="InterPro" id="IPR037232">
    <property type="entry name" value="NADH_quin_OxRdtase_su_C/D-like"/>
</dbReference>
<dbReference type="InterPro" id="IPR001268">
    <property type="entry name" value="NADH_UbQ_OxRdtase_30kDa_su"/>
</dbReference>
<dbReference type="InterPro" id="IPR014029">
    <property type="entry name" value="NADH_UbQ_OxRdtase_49kDa_CS"/>
</dbReference>
<dbReference type="InterPro" id="IPR022885">
    <property type="entry name" value="NDH1_su_D/H"/>
</dbReference>
<dbReference type="InterPro" id="IPR029014">
    <property type="entry name" value="NiFe-Hase_large"/>
</dbReference>
<dbReference type="NCBIfam" id="TIGR01961">
    <property type="entry name" value="NuoC_fam"/>
    <property type="match status" value="1"/>
</dbReference>
<dbReference type="NCBIfam" id="TIGR01962">
    <property type="entry name" value="NuoD"/>
    <property type="match status" value="1"/>
</dbReference>
<dbReference type="NCBIfam" id="NF004739">
    <property type="entry name" value="PRK06075.1"/>
    <property type="match status" value="1"/>
</dbReference>
<dbReference type="NCBIfam" id="NF008728">
    <property type="entry name" value="PRK11742.1"/>
    <property type="match status" value="1"/>
</dbReference>
<dbReference type="PANTHER" id="PTHR11993:SF45">
    <property type="entry name" value="NADH-QUINONE OXIDOREDUCTASE SUBUNIT C_D"/>
    <property type="match status" value="1"/>
</dbReference>
<dbReference type="PANTHER" id="PTHR11993">
    <property type="entry name" value="NADH-UBIQUINONE OXIDOREDUCTASE 49 KDA SUBUNIT"/>
    <property type="match status" value="1"/>
</dbReference>
<dbReference type="Pfam" id="PF00329">
    <property type="entry name" value="Complex1_30kDa"/>
    <property type="match status" value="1"/>
</dbReference>
<dbReference type="Pfam" id="PF00346">
    <property type="entry name" value="Complex1_49kDa"/>
    <property type="match status" value="1"/>
</dbReference>
<dbReference type="SUPFAM" id="SSF56762">
    <property type="entry name" value="HydB/Nqo4-like"/>
    <property type="match status" value="1"/>
</dbReference>
<dbReference type="SUPFAM" id="SSF143243">
    <property type="entry name" value="Nqo5-like"/>
    <property type="match status" value="1"/>
</dbReference>
<dbReference type="PROSITE" id="PS00535">
    <property type="entry name" value="COMPLEX1_49K"/>
    <property type="match status" value="1"/>
</dbReference>
<reference key="1">
    <citation type="submission" date="2009-07" db="EMBL/GenBank/DDBJ databases">
        <title>Complete sequence of Pectobacterium carotovorum subsp. carotovorum PC1.</title>
        <authorList>
            <consortium name="US DOE Joint Genome Institute"/>
            <person name="Lucas S."/>
            <person name="Copeland A."/>
            <person name="Lapidus A."/>
            <person name="Glavina del Rio T."/>
            <person name="Tice H."/>
            <person name="Bruce D."/>
            <person name="Goodwin L."/>
            <person name="Pitluck S."/>
            <person name="Munk A.C."/>
            <person name="Brettin T."/>
            <person name="Detter J.C."/>
            <person name="Han C."/>
            <person name="Tapia R."/>
            <person name="Larimer F."/>
            <person name="Land M."/>
            <person name="Hauser L."/>
            <person name="Kyrpides N."/>
            <person name="Mikhailova N."/>
            <person name="Balakrishnan V."/>
            <person name="Glasner J."/>
            <person name="Perna N.T."/>
        </authorList>
    </citation>
    <scope>NUCLEOTIDE SEQUENCE [LARGE SCALE GENOMIC DNA]</scope>
    <source>
        <strain>PC1</strain>
    </source>
</reference>
<evidence type="ECO:0000255" key="1">
    <source>
        <dbReference type="HAMAP-Rule" id="MF_01359"/>
    </source>
</evidence>
<comment type="function">
    <text evidence="1">NDH-1 shuttles electrons from NADH, via FMN and iron-sulfur (Fe-S) centers, to quinones in the respiratory chain. The immediate electron acceptor for the enzyme in this species is believed to be ubiquinone. Couples the redox reaction to proton translocation (for every two electrons transferred, four hydrogen ions are translocated across the cytoplasmic membrane), and thus conserves the redox energy in a proton gradient.</text>
</comment>
<comment type="catalytic activity">
    <reaction evidence="1">
        <text>a quinone + NADH + 5 H(+)(in) = a quinol + NAD(+) + 4 H(+)(out)</text>
        <dbReference type="Rhea" id="RHEA:57888"/>
        <dbReference type="ChEBI" id="CHEBI:15378"/>
        <dbReference type="ChEBI" id="CHEBI:24646"/>
        <dbReference type="ChEBI" id="CHEBI:57540"/>
        <dbReference type="ChEBI" id="CHEBI:57945"/>
        <dbReference type="ChEBI" id="CHEBI:132124"/>
    </reaction>
</comment>
<comment type="subunit">
    <text evidence="1">NDH-1 is composed of 13 different subunits. Subunits NuoB, CD, E, F, and G constitute the peripheral sector of the complex.</text>
</comment>
<comment type="subcellular location">
    <subcellularLocation>
        <location evidence="1">Cell inner membrane</location>
        <topology evidence="1">Peripheral membrane protein</topology>
        <orientation evidence="1">Cytoplasmic side</orientation>
    </subcellularLocation>
</comment>
<comment type="similarity">
    <text evidence="1">In the N-terminal section; belongs to the complex I 30 kDa subunit family.</text>
</comment>
<comment type="similarity">
    <text evidence="1">In the C-terminal section; belongs to the complex I 49 kDa subunit family.</text>
</comment>
<protein>
    <recommendedName>
        <fullName evidence="1">NADH-quinone oxidoreductase subunit C/D</fullName>
        <ecNumber evidence="1">7.1.1.-</ecNumber>
    </recommendedName>
    <alternativeName>
        <fullName evidence="1">NADH dehydrogenase I subunit C/D</fullName>
    </alternativeName>
    <alternativeName>
        <fullName evidence="1">NDH-1 subunit C/D</fullName>
    </alternativeName>
</protein>
<name>NUOCD_PECCP</name>
<sequence length="599" mass="68806">MTDLTTHDLAQPGWQTRDHLDDPVVGELCNRFGPDAFTVQATRTGIPVVWVKREQLLDVVAFLKKQPKPYVMLFDLHGMDERLRTHREGLPAADYSVFYHIISIERNRDIMLKVALAESDLHVPTVTKLFPNANWYERETWEMFGITFNGHPHLTRIMMPHTWEGHPLRKDYPARATEFDPFVLTKQKEDLEMESLTFKPEEWGMKRGTENEDFMFLNLGPNHPSSHGAFRIILQLDGEEIVDCVPDVGYHHRGAEKMGERQSWHSYIPYTDRIEYLGGCVNEMPYVLAVEKLAGIEVPDRVKTIRVMLSELFRINSHLLYISTYIQDVGAMTPVFFAFTDRQKIYDLVEAITGFRMHPAWFRIGGVAHDLPRGWERLLREFLDWMPSRLDTYVKAALQNTILKGRTQGVAAYNAKEALDWGVTGAGLRATGIGFDVRKWRPYSGYENFDFEVPVGDGISDCYSRVMLKVEELRQSLRILDQCLKNMPEGPFKADHPLTTPPPKERTLQHIDTLINHFLQVSWGPVMPANESFQMVEATKGINSYYLTSDGGTMSYRTRIRTPSYAHLQQIPSVIRGCLVSDLIVYLGSIDFVMSDVDR</sequence>
<gene>
    <name evidence="1" type="primary">nuoC</name>
    <name evidence="1" type="synonym">nuoCD</name>
    <name evidence="1" type="synonym">nuoD</name>
    <name type="ordered locus">PC1_2770</name>
</gene>
<proteinExistence type="inferred from homology"/>
<keyword id="KW-0997">Cell inner membrane</keyword>
<keyword id="KW-1003">Cell membrane</keyword>
<keyword id="KW-0472">Membrane</keyword>
<keyword id="KW-0511">Multifunctional enzyme</keyword>
<keyword id="KW-0520">NAD</keyword>
<keyword id="KW-0874">Quinone</keyword>
<keyword id="KW-1278">Translocase</keyword>
<keyword id="KW-0813">Transport</keyword>
<keyword id="KW-0830">Ubiquinone</keyword>
<accession>C6DA44</accession>
<feature type="chain" id="PRO_1000214871" description="NADH-quinone oxidoreductase subunit C/D">
    <location>
        <begin position="1"/>
        <end position="599"/>
    </location>
</feature>
<feature type="region of interest" description="NADH dehydrogenase I subunit C" evidence="1">
    <location>
        <begin position="1"/>
        <end position="189"/>
    </location>
</feature>
<feature type="region of interest" description="NADH dehydrogenase I subunit D" evidence="1">
    <location>
        <begin position="213"/>
        <end position="599"/>
    </location>
</feature>
<organism>
    <name type="scientific">Pectobacterium carotovorum subsp. carotovorum (strain PC1)</name>
    <dbReference type="NCBI Taxonomy" id="561230"/>
    <lineage>
        <taxon>Bacteria</taxon>
        <taxon>Pseudomonadati</taxon>
        <taxon>Pseudomonadota</taxon>
        <taxon>Gammaproteobacteria</taxon>
        <taxon>Enterobacterales</taxon>
        <taxon>Pectobacteriaceae</taxon>
        <taxon>Pectobacterium</taxon>
    </lineage>
</organism>